<dbReference type="EMBL" id="BA000022">
    <property type="protein sequence ID" value="BAA18469.1"/>
    <property type="molecule type" value="Genomic_DNA"/>
</dbReference>
<dbReference type="PIR" id="S76210">
    <property type="entry name" value="S76210"/>
</dbReference>
<dbReference type="SMR" id="P74374"/>
<dbReference type="FunCoup" id="P74374">
    <property type="interactions" value="322"/>
</dbReference>
<dbReference type="STRING" id="1148.gene:10499347"/>
<dbReference type="PaxDb" id="1148-1653556"/>
<dbReference type="EnsemblBacteria" id="BAA18469">
    <property type="protein sequence ID" value="BAA18469"/>
    <property type="gene ID" value="BAA18469"/>
</dbReference>
<dbReference type="KEGG" id="syn:sll1520"/>
<dbReference type="eggNOG" id="COG0497">
    <property type="taxonomic scope" value="Bacteria"/>
</dbReference>
<dbReference type="InParanoid" id="P74374"/>
<dbReference type="PhylomeDB" id="P74374"/>
<dbReference type="Proteomes" id="UP000001425">
    <property type="component" value="Chromosome"/>
</dbReference>
<dbReference type="GO" id="GO:0043590">
    <property type="term" value="C:bacterial nucleoid"/>
    <property type="evidence" value="ECO:0000318"/>
    <property type="project" value="GO_Central"/>
</dbReference>
<dbReference type="GO" id="GO:0005524">
    <property type="term" value="F:ATP binding"/>
    <property type="evidence" value="ECO:0007669"/>
    <property type="project" value="UniProtKB-KW"/>
</dbReference>
<dbReference type="GO" id="GO:0006310">
    <property type="term" value="P:DNA recombination"/>
    <property type="evidence" value="ECO:0007669"/>
    <property type="project" value="InterPro"/>
</dbReference>
<dbReference type="GO" id="GO:0006281">
    <property type="term" value="P:DNA repair"/>
    <property type="evidence" value="ECO:0007669"/>
    <property type="project" value="UniProtKB-KW"/>
</dbReference>
<dbReference type="GO" id="GO:0009432">
    <property type="term" value="P:SOS response"/>
    <property type="evidence" value="ECO:0000318"/>
    <property type="project" value="GO_Central"/>
</dbReference>
<dbReference type="CDD" id="cd03241">
    <property type="entry name" value="ABC_RecN"/>
    <property type="match status" value="1"/>
</dbReference>
<dbReference type="FunFam" id="3.40.50.300:FF:000319">
    <property type="entry name" value="DNA repair protein RecN"/>
    <property type="match status" value="1"/>
</dbReference>
<dbReference type="FunFam" id="3.40.50.300:FF:000356">
    <property type="entry name" value="DNA repair protein RecN"/>
    <property type="match status" value="1"/>
</dbReference>
<dbReference type="Gene3D" id="3.40.50.300">
    <property type="entry name" value="P-loop containing nucleotide triphosphate hydrolases"/>
    <property type="match status" value="2"/>
</dbReference>
<dbReference type="InterPro" id="IPR004604">
    <property type="entry name" value="DNA_recomb/repair_RecN"/>
</dbReference>
<dbReference type="InterPro" id="IPR027417">
    <property type="entry name" value="P-loop_NTPase"/>
</dbReference>
<dbReference type="InterPro" id="IPR003395">
    <property type="entry name" value="RecF/RecN/SMC_N"/>
</dbReference>
<dbReference type="NCBIfam" id="TIGR00634">
    <property type="entry name" value="recN"/>
    <property type="match status" value="1"/>
</dbReference>
<dbReference type="PANTHER" id="PTHR11059">
    <property type="entry name" value="DNA REPAIR PROTEIN RECN"/>
    <property type="match status" value="1"/>
</dbReference>
<dbReference type="PANTHER" id="PTHR11059:SF0">
    <property type="entry name" value="DNA REPAIR PROTEIN RECN"/>
    <property type="match status" value="1"/>
</dbReference>
<dbReference type="Pfam" id="PF02463">
    <property type="entry name" value="SMC_N"/>
    <property type="match status" value="1"/>
</dbReference>
<dbReference type="PIRSF" id="PIRSF003128">
    <property type="entry name" value="RecN"/>
    <property type="match status" value="1"/>
</dbReference>
<dbReference type="SUPFAM" id="SSF52540">
    <property type="entry name" value="P-loop containing nucleoside triphosphate hydrolases"/>
    <property type="match status" value="1"/>
</dbReference>
<comment type="function">
    <text evidence="1">May be involved in recombinational repair of damaged DNA.</text>
</comment>
<comment type="similarity">
    <text evidence="3">Belongs to the RecN family.</text>
</comment>
<evidence type="ECO:0000250" key="1"/>
<evidence type="ECO:0000255" key="2"/>
<evidence type="ECO:0000305" key="3"/>
<reference key="1">
    <citation type="journal article" date="1996" name="DNA Res.">
        <title>Sequence analysis of the genome of the unicellular cyanobacterium Synechocystis sp. strain PCC6803. II. Sequence determination of the entire genome and assignment of potential protein-coding regions.</title>
        <authorList>
            <person name="Kaneko T."/>
            <person name="Sato S."/>
            <person name="Kotani H."/>
            <person name="Tanaka A."/>
            <person name="Asamizu E."/>
            <person name="Nakamura Y."/>
            <person name="Miyajima N."/>
            <person name="Hirosawa M."/>
            <person name="Sugiura M."/>
            <person name="Sasamoto S."/>
            <person name="Kimura T."/>
            <person name="Hosouchi T."/>
            <person name="Matsuno A."/>
            <person name="Muraki A."/>
            <person name="Nakazaki N."/>
            <person name="Naruo K."/>
            <person name="Okumura S."/>
            <person name="Shimpo S."/>
            <person name="Takeuchi C."/>
            <person name="Wada T."/>
            <person name="Watanabe A."/>
            <person name="Yamada M."/>
            <person name="Yasuda M."/>
            <person name="Tabata S."/>
        </authorList>
    </citation>
    <scope>NUCLEOTIDE SEQUENCE [LARGE SCALE GENOMIC DNA]</scope>
    <source>
        <strain>ATCC 27184 / PCC 6803 / Kazusa</strain>
    </source>
</reference>
<accession>P74374</accession>
<keyword id="KW-0067">ATP-binding</keyword>
<keyword id="KW-0227">DNA damage</keyword>
<keyword id="KW-0234">DNA repair</keyword>
<keyword id="KW-0547">Nucleotide-binding</keyword>
<keyword id="KW-1185">Reference proteome</keyword>
<sequence length="584" mass="64547">MLLSLRINNFALIDCLEINFGQGLNVLTGETGAGKSILLDAIDLLLGGKAGARVLRQGCSSGVIEGIFSTSTELNDWLATQAIEPLEDNTIACTREFSKKGSSLNSRSRLNGVLVNRQILAELRSQLVEITAQGQTQQLLDPGQQRQLLDLFGGQNLLEKRQAVEITYKEFTQAKQALTARQQSEQNRLQRLDFLTYQLQELTEAELTDGDEWELLIQEQEKLSHVVELQQLSYQATQLLYQSERDTPAIADLLGDAEGQLQTMAEFDSSLNPLLELVQTALTQVIEAGRQVQRYGDNLEADPERLGEVEARLQVLKRICRKYGPSLTEAIAYQEKIQAEYDQLTDGEQSLAQLQESLTKAEQELIKHCGQLTLIRQKTAQKLEKRLVQELKPLAMEKVIFVCQLESSAPSSFGAEQVVFYFSPNTGEKIQPLAATASGGEMSRFLLALKACFSELAPPSQTLIFDEIDVGVSGKVAQAIADKLAQLSQRQQLLCVTHQPLVAALADAHFHVDKVVINENIADPTNPQLDEDLRTVIRITPLQSDGDRQQELAQLTGGHSAKEALAFAQSLLEKSAARRQASQV</sequence>
<protein>
    <recommendedName>
        <fullName>DNA repair protein RecN</fullName>
    </recommendedName>
    <alternativeName>
        <fullName>Recombination protein N</fullName>
    </alternativeName>
</protein>
<gene>
    <name type="primary">recN</name>
    <name type="ordered locus">sll1520</name>
</gene>
<feature type="chain" id="PRO_0000188027" description="DNA repair protein RecN">
    <location>
        <begin position="1"/>
        <end position="584"/>
    </location>
</feature>
<feature type="binding site" evidence="2">
    <location>
        <begin position="29"/>
        <end position="36"/>
    </location>
    <ligand>
        <name>ATP</name>
        <dbReference type="ChEBI" id="CHEBI:30616"/>
    </ligand>
</feature>
<organism>
    <name type="scientific">Synechocystis sp. (strain ATCC 27184 / PCC 6803 / Kazusa)</name>
    <dbReference type="NCBI Taxonomy" id="1111708"/>
    <lineage>
        <taxon>Bacteria</taxon>
        <taxon>Bacillati</taxon>
        <taxon>Cyanobacteriota</taxon>
        <taxon>Cyanophyceae</taxon>
        <taxon>Synechococcales</taxon>
        <taxon>Merismopediaceae</taxon>
        <taxon>Synechocystis</taxon>
    </lineage>
</organism>
<proteinExistence type="inferred from homology"/>
<name>RECN_SYNY3</name>